<protein>
    <recommendedName>
        <fullName>Glutamyl-tRNA reductase</fullName>
        <shortName>GluTR</shortName>
        <ecNumber>1.2.1.70</ecNumber>
    </recommendedName>
</protein>
<dbReference type="EC" id="1.2.1.70"/>
<dbReference type="EMBL" id="M96364">
    <property type="protein sequence ID" value="AAA23112.1"/>
    <property type="molecule type" value="Genomic_DNA"/>
</dbReference>
<dbReference type="EMBL" id="AF080069">
    <property type="protein sequence ID" value="AAC61856.1"/>
    <property type="molecule type" value="Genomic_DNA"/>
</dbReference>
<dbReference type="EMBL" id="CP001099">
    <property type="protein sequence ID" value="ACF11155.1"/>
    <property type="molecule type" value="Genomic_DNA"/>
</dbReference>
<dbReference type="PIR" id="A48359">
    <property type="entry name" value="A48359"/>
</dbReference>
<dbReference type="RefSeq" id="WP_012501988.1">
    <property type="nucleotide sequence ID" value="NC_011027.1"/>
</dbReference>
<dbReference type="SMR" id="P28462"/>
<dbReference type="STRING" id="517417.Cpar_0738"/>
<dbReference type="KEGG" id="cpc:Cpar_0738"/>
<dbReference type="eggNOG" id="COG0373">
    <property type="taxonomic scope" value="Bacteria"/>
</dbReference>
<dbReference type="HOGENOM" id="CLU_035113_2_2_10"/>
<dbReference type="OrthoDB" id="110209at2"/>
<dbReference type="BRENDA" id="1.2.1.70">
    <property type="organism ID" value="1348"/>
</dbReference>
<dbReference type="UniPathway" id="UPA00251">
    <property type="reaction ID" value="UER00316"/>
</dbReference>
<dbReference type="Proteomes" id="UP000008811">
    <property type="component" value="Chromosome"/>
</dbReference>
<dbReference type="GO" id="GO:0008883">
    <property type="term" value="F:glutamyl-tRNA reductase activity"/>
    <property type="evidence" value="ECO:0007669"/>
    <property type="project" value="UniProtKB-UniRule"/>
</dbReference>
<dbReference type="GO" id="GO:0050661">
    <property type="term" value="F:NADP binding"/>
    <property type="evidence" value="ECO:0007669"/>
    <property type="project" value="InterPro"/>
</dbReference>
<dbReference type="GO" id="GO:0015995">
    <property type="term" value="P:chlorophyll biosynthetic process"/>
    <property type="evidence" value="ECO:0007669"/>
    <property type="project" value="UniProtKB-UniRule"/>
</dbReference>
<dbReference type="GO" id="GO:0019353">
    <property type="term" value="P:protoporphyrinogen IX biosynthetic process from glutamate"/>
    <property type="evidence" value="ECO:0007669"/>
    <property type="project" value="TreeGrafter"/>
</dbReference>
<dbReference type="CDD" id="cd05213">
    <property type="entry name" value="NAD_bind_Glutamyl_tRNA_reduct"/>
    <property type="match status" value="1"/>
</dbReference>
<dbReference type="FunFam" id="3.30.460.30:FF:000001">
    <property type="entry name" value="Glutamyl-tRNA reductase"/>
    <property type="match status" value="1"/>
</dbReference>
<dbReference type="FunFam" id="3.40.50.720:FF:000031">
    <property type="entry name" value="Glutamyl-tRNA reductase"/>
    <property type="match status" value="1"/>
</dbReference>
<dbReference type="Gene3D" id="3.30.460.30">
    <property type="entry name" value="Glutamyl-tRNA reductase, N-terminal domain"/>
    <property type="match status" value="1"/>
</dbReference>
<dbReference type="Gene3D" id="3.40.50.720">
    <property type="entry name" value="NAD(P)-binding Rossmann-like Domain"/>
    <property type="match status" value="1"/>
</dbReference>
<dbReference type="HAMAP" id="MF_00087">
    <property type="entry name" value="Glu_tRNA_reductase"/>
    <property type="match status" value="1"/>
</dbReference>
<dbReference type="InterPro" id="IPR000343">
    <property type="entry name" value="4pyrrol_synth_GluRdtase"/>
</dbReference>
<dbReference type="InterPro" id="IPR015896">
    <property type="entry name" value="4pyrrol_synth_GluRdtase_dimer"/>
</dbReference>
<dbReference type="InterPro" id="IPR015895">
    <property type="entry name" value="4pyrrol_synth_GluRdtase_N"/>
</dbReference>
<dbReference type="InterPro" id="IPR018214">
    <property type="entry name" value="GluRdtase_CS"/>
</dbReference>
<dbReference type="InterPro" id="IPR036453">
    <property type="entry name" value="GluRdtase_dimer_dom_sf"/>
</dbReference>
<dbReference type="InterPro" id="IPR036343">
    <property type="entry name" value="GluRdtase_N_sf"/>
</dbReference>
<dbReference type="InterPro" id="IPR036291">
    <property type="entry name" value="NAD(P)-bd_dom_sf"/>
</dbReference>
<dbReference type="InterPro" id="IPR006151">
    <property type="entry name" value="Shikm_DH/Glu-tRNA_Rdtase"/>
</dbReference>
<dbReference type="NCBIfam" id="TIGR01035">
    <property type="entry name" value="hemA"/>
    <property type="match status" value="1"/>
</dbReference>
<dbReference type="PANTHER" id="PTHR43013">
    <property type="entry name" value="GLUTAMYL-TRNA REDUCTASE"/>
    <property type="match status" value="1"/>
</dbReference>
<dbReference type="PANTHER" id="PTHR43013:SF1">
    <property type="entry name" value="GLUTAMYL-TRNA REDUCTASE"/>
    <property type="match status" value="1"/>
</dbReference>
<dbReference type="Pfam" id="PF00745">
    <property type="entry name" value="GlutR_dimer"/>
    <property type="match status" value="1"/>
</dbReference>
<dbReference type="Pfam" id="PF05201">
    <property type="entry name" value="GlutR_N"/>
    <property type="match status" value="1"/>
</dbReference>
<dbReference type="Pfam" id="PF01488">
    <property type="entry name" value="Shikimate_DH"/>
    <property type="match status" value="1"/>
</dbReference>
<dbReference type="PIRSF" id="PIRSF000445">
    <property type="entry name" value="4pyrrol_synth_GluRdtase"/>
    <property type="match status" value="1"/>
</dbReference>
<dbReference type="SUPFAM" id="SSF69742">
    <property type="entry name" value="Glutamyl tRNA-reductase catalytic, N-terminal domain"/>
    <property type="match status" value="1"/>
</dbReference>
<dbReference type="SUPFAM" id="SSF69075">
    <property type="entry name" value="Glutamyl tRNA-reductase dimerization domain"/>
    <property type="match status" value="1"/>
</dbReference>
<dbReference type="SUPFAM" id="SSF51735">
    <property type="entry name" value="NAD(P)-binding Rossmann-fold domains"/>
    <property type="match status" value="1"/>
</dbReference>
<dbReference type="PROSITE" id="PS00747">
    <property type="entry name" value="GLUTR"/>
    <property type="match status" value="1"/>
</dbReference>
<organism>
    <name type="scientific">Chlorobaculum parvum (strain DSM 263 / NCIMB 8327)</name>
    <name type="common">Chlorobium vibrioforme subsp. thiosulfatophilum</name>
    <dbReference type="NCBI Taxonomy" id="517417"/>
    <lineage>
        <taxon>Bacteria</taxon>
        <taxon>Pseudomonadati</taxon>
        <taxon>Chlorobiota</taxon>
        <taxon>Chlorobiia</taxon>
        <taxon>Chlorobiales</taxon>
        <taxon>Chlorobiaceae</taxon>
        <taxon>Chlorobaculum</taxon>
    </lineage>
</organism>
<sequence length="426" mass="48142">MNIISVGVNHKTAPIEIRERIALSEVQNKEFVTDLVSSGLASEAMVVSTCNRTELYVVPGMPEVNCDYLKDYIISYKDARNAVRPEHFFNRFYCGTARHLFEVSSAIDSLVLGEGQILGQVKDAYRIAAEVGTAGILLTRLCHTAFSVAKKVKTRTKLMEGAVSVSYAAVELAQKIFSNLSMKKVLLIGAGETGELAAKHMYAKNARNIVITNRTQSKAEALAEELGTNRVLPYESYKEHLHEFDIIITAVSTKEYILNAAEMQQSMAKRRLKPVIILDLGLPRNVDPEVGALQNMFLKDIDALKHIIDKNLERRRAELPKVKSIIDEELIGFGQWINTLKVRPTIVDLQSKFIEIKEKELERYRHKVSEEELKRMEHLTDRILKKILHHPIKMLKAPVDTADNIPSKVNLVRNIFDLEEPNQSLQ</sequence>
<feature type="chain" id="PRO_0000114009" description="Glutamyl-tRNA reductase">
    <location>
        <begin position="1"/>
        <end position="426"/>
    </location>
</feature>
<feature type="active site" description="Nucleophile" evidence="1">
    <location>
        <position position="50"/>
    </location>
</feature>
<feature type="binding site" evidence="1">
    <location>
        <begin position="49"/>
        <end position="52"/>
    </location>
    <ligand>
        <name>substrate</name>
    </ligand>
</feature>
<feature type="binding site" evidence="1">
    <location>
        <position position="109"/>
    </location>
    <ligand>
        <name>substrate</name>
    </ligand>
</feature>
<feature type="binding site" evidence="1">
    <location>
        <begin position="114"/>
        <end position="116"/>
    </location>
    <ligand>
        <name>substrate</name>
    </ligand>
</feature>
<feature type="binding site" evidence="1">
    <location>
        <position position="120"/>
    </location>
    <ligand>
        <name>substrate</name>
    </ligand>
</feature>
<feature type="binding site" evidence="1">
    <location>
        <begin position="189"/>
        <end position="194"/>
    </location>
    <ligand>
        <name>NADP(+)</name>
        <dbReference type="ChEBI" id="CHEBI:58349"/>
    </ligand>
</feature>
<feature type="site" description="Important for activity" evidence="1">
    <location>
        <position position="99"/>
    </location>
</feature>
<feature type="sequence conflict" description="In Ref. 1; AAC61856/AAA23112." evidence="3" ref="1">
    <original>TA</original>
    <variation>SP</variation>
    <location>
        <begin position="144"/>
        <end position="145"/>
    </location>
</feature>
<feature type="sequence conflict" description="In Ref. 1; AAC61856/AAA23112." evidence="3" ref="1">
    <original>GETGELAAKHMYAKNARNIVITNRTQSKAEALA</original>
    <variation>VKQSWQQSTCTPRTPGTSSSPTGRNPRPRAC</variation>
    <location>
        <begin position="191"/>
        <end position="223"/>
    </location>
</feature>
<proteinExistence type="evidence at protein level"/>
<evidence type="ECO:0000250" key="1"/>
<evidence type="ECO:0000269" key="2">
    <source>
    </source>
</evidence>
<evidence type="ECO:0000305" key="3"/>
<gene>
    <name type="primary">hemA</name>
    <name type="ordered locus">Cpar_0738</name>
</gene>
<accession>P28462</accession>
<accession>B3QMK2</accession>
<accession>O87494</accession>
<keyword id="KW-0149">Chlorophyll biosynthesis</keyword>
<keyword id="KW-0521">NADP</keyword>
<keyword id="KW-0560">Oxidoreductase</keyword>
<keyword id="KW-0627">Porphyrin biosynthesis</keyword>
<comment type="function">
    <text evidence="2">Catalyzes the NADPH-dependent reduction of glutamyl-tRNA(Glu) to glutamate 1-semialdehyde (GSA).</text>
</comment>
<comment type="catalytic activity">
    <reaction>
        <text>(S)-4-amino-5-oxopentanoate + tRNA(Glu) + NADP(+) = L-glutamyl-tRNA(Glu) + NADPH + H(+)</text>
        <dbReference type="Rhea" id="RHEA:12344"/>
        <dbReference type="Rhea" id="RHEA-COMP:9663"/>
        <dbReference type="Rhea" id="RHEA-COMP:9680"/>
        <dbReference type="ChEBI" id="CHEBI:15378"/>
        <dbReference type="ChEBI" id="CHEBI:57501"/>
        <dbReference type="ChEBI" id="CHEBI:57783"/>
        <dbReference type="ChEBI" id="CHEBI:58349"/>
        <dbReference type="ChEBI" id="CHEBI:78442"/>
        <dbReference type="ChEBI" id="CHEBI:78520"/>
        <dbReference type="EC" id="1.2.1.70"/>
    </reaction>
</comment>
<comment type="pathway">
    <text>Porphyrin-containing compound metabolism; protoporphyrin-IX biosynthesis; 5-aminolevulinate from L-glutamyl-tRNA(Glu): step 1/2.</text>
</comment>
<comment type="subunit">
    <text evidence="2">Homodimer.</text>
</comment>
<comment type="domain">
    <text evidence="1">Possesses an unusual extended V-shaped dimeric structure with each monomer consisting of three distinct domains arranged along a curved 'spinal' alpha-helix. The N-terminal catalytic domain specifically recognizes the glutamate moiety of the substrate. The second domain is the NADPH-binding domain, and the third C-terminal domain is responsible for dimerization (By similarity).</text>
</comment>
<comment type="miscellaneous">
    <text evidence="1">During catalysis, the active site Cys acts as a nucleophile attacking the alpha-carbonyl group of tRNA-bound glutamate with the formation of a thioester intermediate between enzyme and glutamate, and the concomitant release of tRNA(Glu). The thioester intermediate is finally reduced by direct hydride transfer from NADPH, to form the product GSA (By similarity).</text>
</comment>
<comment type="miscellaneous">
    <text>Was shown to bind heme, but the precise role of heme is unclear.</text>
</comment>
<comment type="similarity">
    <text evidence="3">Belongs to the glutamyl-tRNA reductase family.</text>
</comment>
<name>HEM1_CHLP8</name>
<reference key="1">
    <citation type="journal article" date="1991" name="Arch. Microbiol.">
        <title>Structure and expression of the Chlorobium vibrioforme hemA gene.</title>
        <authorList>
            <person name="Majumdar D."/>
            <person name="Avissar Y.J."/>
            <person name="Wyche J.H."/>
            <person name="Beale S.I."/>
        </authorList>
    </citation>
    <scope>NUCLEOTIDE SEQUENCE [GENOMIC DNA]</scope>
</reference>
<reference key="2">
    <citation type="journal article" date="2005" name="J. Bacteriol.">
        <title>Glutamyl-tRNA reductase of Chlorobium vibrioforme is a dissociable homodimer that contains one tightly bound heme per subunit.</title>
        <authorList>
            <person name="Srivastava A."/>
            <person name="Beale S.I."/>
        </authorList>
    </citation>
    <scope>SEQUENCE REVISION TO C-TERMINUS</scope>
    <scope>FUNCTION</scope>
    <scope>HEME BINDING</scope>
    <scope>SUBUNIT</scope>
</reference>
<reference key="3">
    <citation type="submission" date="2008-06" db="EMBL/GenBank/DDBJ databases">
        <title>Complete sequence of Chlorobaculum parvum NCIB 8327.</title>
        <authorList>
            <consortium name="US DOE Joint Genome Institute"/>
            <person name="Lucas S."/>
            <person name="Copeland A."/>
            <person name="Lapidus A."/>
            <person name="Glavina del Rio T."/>
            <person name="Dalin E."/>
            <person name="Tice H."/>
            <person name="Bruce D."/>
            <person name="Goodwin L."/>
            <person name="Pitluck S."/>
            <person name="Schmutz J."/>
            <person name="Larimer F."/>
            <person name="Land M."/>
            <person name="Hauser L."/>
            <person name="Kyrpides N."/>
            <person name="Mikhailova N."/>
            <person name="Zhao F."/>
            <person name="Li T."/>
            <person name="Liu Z."/>
            <person name="Overmann J."/>
            <person name="Bryant D.A."/>
            <person name="Richardson P."/>
        </authorList>
    </citation>
    <scope>NUCLEOTIDE SEQUENCE [LARGE SCALE GENOMIC DNA]</scope>
    <source>
        <strain>DSM 263 / NCIMB 8327</strain>
    </source>
</reference>